<accession>B7UK33</accession>
<evidence type="ECO:0000255" key="1">
    <source>
        <dbReference type="HAMAP-Rule" id="MF_01326"/>
    </source>
</evidence>
<evidence type="ECO:0000305" key="2"/>
<protein>
    <recommendedName>
        <fullName evidence="1">Large ribosomal subunit protein uL24</fullName>
    </recommendedName>
    <alternativeName>
        <fullName evidence="2">50S ribosomal protein L24</fullName>
    </alternativeName>
</protein>
<gene>
    <name evidence="1" type="primary">rplX</name>
    <name type="ordered locus">E2348C_3572</name>
</gene>
<sequence length="104" mass="11346">MAAKIRRDDEVIVLTGKDKGKRGKVKNVLSSGKVIVEGINLVKKHQKPVPALNQPGGIVEKEAAIQVSNVAIFNATTGKADRVGFRFEDGKKVRFFKSNSETIK</sequence>
<comment type="function">
    <text evidence="1">One of two assembly initiator proteins, it binds directly to the 5'-end of the 23S rRNA, where it nucleates assembly of the 50S subunit.</text>
</comment>
<comment type="function">
    <text evidence="1">One of the proteins that surrounds the polypeptide exit tunnel on the outside of the subunit.</text>
</comment>
<comment type="subunit">
    <text evidence="1">Part of the 50S ribosomal subunit.</text>
</comment>
<comment type="similarity">
    <text evidence="1">Belongs to the universal ribosomal protein uL24 family.</text>
</comment>
<reference key="1">
    <citation type="journal article" date="2009" name="J. Bacteriol.">
        <title>Complete genome sequence and comparative genome analysis of enteropathogenic Escherichia coli O127:H6 strain E2348/69.</title>
        <authorList>
            <person name="Iguchi A."/>
            <person name="Thomson N.R."/>
            <person name="Ogura Y."/>
            <person name="Saunders D."/>
            <person name="Ooka T."/>
            <person name="Henderson I.R."/>
            <person name="Harris D."/>
            <person name="Asadulghani M."/>
            <person name="Kurokawa K."/>
            <person name="Dean P."/>
            <person name="Kenny B."/>
            <person name="Quail M.A."/>
            <person name="Thurston S."/>
            <person name="Dougan G."/>
            <person name="Hayashi T."/>
            <person name="Parkhill J."/>
            <person name="Frankel G."/>
        </authorList>
    </citation>
    <scope>NUCLEOTIDE SEQUENCE [LARGE SCALE GENOMIC DNA]</scope>
    <source>
        <strain>E2348/69 / EPEC</strain>
    </source>
</reference>
<dbReference type="EMBL" id="FM180568">
    <property type="protein sequence ID" value="CAS11120.1"/>
    <property type="molecule type" value="Genomic_DNA"/>
</dbReference>
<dbReference type="RefSeq" id="WP_000729186.1">
    <property type="nucleotide sequence ID" value="NC_011601.1"/>
</dbReference>
<dbReference type="SMR" id="B7UK33"/>
<dbReference type="KEGG" id="ecg:E2348C_3572"/>
<dbReference type="HOGENOM" id="CLU_093315_2_2_6"/>
<dbReference type="Proteomes" id="UP000008205">
    <property type="component" value="Chromosome"/>
</dbReference>
<dbReference type="GO" id="GO:0005829">
    <property type="term" value="C:cytosol"/>
    <property type="evidence" value="ECO:0007669"/>
    <property type="project" value="UniProtKB-ARBA"/>
</dbReference>
<dbReference type="GO" id="GO:1990904">
    <property type="term" value="C:ribonucleoprotein complex"/>
    <property type="evidence" value="ECO:0007669"/>
    <property type="project" value="UniProtKB-KW"/>
</dbReference>
<dbReference type="GO" id="GO:0005840">
    <property type="term" value="C:ribosome"/>
    <property type="evidence" value="ECO:0007669"/>
    <property type="project" value="UniProtKB-KW"/>
</dbReference>
<dbReference type="GO" id="GO:0019843">
    <property type="term" value="F:rRNA binding"/>
    <property type="evidence" value="ECO:0007669"/>
    <property type="project" value="UniProtKB-UniRule"/>
</dbReference>
<dbReference type="GO" id="GO:0003735">
    <property type="term" value="F:structural constituent of ribosome"/>
    <property type="evidence" value="ECO:0007669"/>
    <property type="project" value="InterPro"/>
</dbReference>
<dbReference type="GO" id="GO:0006412">
    <property type="term" value="P:translation"/>
    <property type="evidence" value="ECO:0007669"/>
    <property type="project" value="UniProtKB-UniRule"/>
</dbReference>
<dbReference type="CDD" id="cd06089">
    <property type="entry name" value="KOW_RPL26"/>
    <property type="match status" value="1"/>
</dbReference>
<dbReference type="FunFam" id="2.30.30.30:FF:000004">
    <property type="entry name" value="50S ribosomal protein L24"/>
    <property type="match status" value="1"/>
</dbReference>
<dbReference type="Gene3D" id="2.30.30.30">
    <property type="match status" value="1"/>
</dbReference>
<dbReference type="HAMAP" id="MF_01326_B">
    <property type="entry name" value="Ribosomal_uL24_B"/>
    <property type="match status" value="1"/>
</dbReference>
<dbReference type="InterPro" id="IPR005824">
    <property type="entry name" value="KOW"/>
</dbReference>
<dbReference type="InterPro" id="IPR014722">
    <property type="entry name" value="Rib_uL2_dom2"/>
</dbReference>
<dbReference type="InterPro" id="IPR003256">
    <property type="entry name" value="Ribosomal_uL24"/>
</dbReference>
<dbReference type="InterPro" id="IPR005825">
    <property type="entry name" value="Ribosomal_uL24_CS"/>
</dbReference>
<dbReference type="InterPro" id="IPR041988">
    <property type="entry name" value="Ribosomal_uL24_KOW"/>
</dbReference>
<dbReference type="InterPro" id="IPR008991">
    <property type="entry name" value="Translation_prot_SH3-like_sf"/>
</dbReference>
<dbReference type="NCBIfam" id="TIGR01079">
    <property type="entry name" value="rplX_bact"/>
    <property type="match status" value="1"/>
</dbReference>
<dbReference type="PANTHER" id="PTHR12903">
    <property type="entry name" value="MITOCHONDRIAL RIBOSOMAL PROTEIN L24"/>
    <property type="match status" value="1"/>
</dbReference>
<dbReference type="Pfam" id="PF00467">
    <property type="entry name" value="KOW"/>
    <property type="match status" value="1"/>
</dbReference>
<dbReference type="Pfam" id="PF17136">
    <property type="entry name" value="ribosomal_L24"/>
    <property type="match status" value="1"/>
</dbReference>
<dbReference type="SMART" id="SM00739">
    <property type="entry name" value="KOW"/>
    <property type="match status" value="1"/>
</dbReference>
<dbReference type="SUPFAM" id="SSF50104">
    <property type="entry name" value="Translation proteins SH3-like domain"/>
    <property type="match status" value="1"/>
</dbReference>
<dbReference type="PROSITE" id="PS01108">
    <property type="entry name" value="RIBOSOMAL_L24"/>
    <property type="match status" value="1"/>
</dbReference>
<feature type="chain" id="PRO_1000165943" description="Large ribosomal subunit protein uL24">
    <location>
        <begin position="1"/>
        <end position="104"/>
    </location>
</feature>
<organism>
    <name type="scientific">Escherichia coli O127:H6 (strain E2348/69 / EPEC)</name>
    <dbReference type="NCBI Taxonomy" id="574521"/>
    <lineage>
        <taxon>Bacteria</taxon>
        <taxon>Pseudomonadati</taxon>
        <taxon>Pseudomonadota</taxon>
        <taxon>Gammaproteobacteria</taxon>
        <taxon>Enterobacterales</taxon>
        <taxon>Enterobacteriaceae</taxon>
        <taxon>Escherichia</taxon>
    </lineage>
</organism>
<keyword id="KW-1185">Reference proteome</keyword>
<keyword id="KW-0687">Ribonucleoprotein</keyword>
<keyword id="KW-0689">Ribosomal protein</keyword>
<keyword id="KW-0694">RNA-binding</keyword>
<keyword id="KW-0699">rRNA-binding</keyword>
<proteinExistence type="inferred from homology"/>
<name>RL24_ECO27</name>